<keyword id="KW-0963">Cytoplasm</keyword>
<keyword id="KW-0694">RNA-binding</keyword>
<protein>
    <recommendedName>
        <fullName evidence="1">SsrA-binding protein</fullName>
    </recommendedName>
    <alternativeName>
        <fullName evidence="1">Small protein B</fullName>
    </alternativeName>
</protein>
<reference key="1">
    <citation type="journal article" date="2007" name="PLoS Biol.">
        <title>Evolution of symbiotic bacteria in the distal human intestine.</title>
        <authorList>
            <person name="Xu J."/>
            <person name="Mahowald M.A."/>
            <person name="Ley R.E."/>
            <person name="Lozupone C.A."/>
            <person name="Hamady M."/>
            <person name="Martens E.C."/>
            <person name="Henrissat B."/>
            <person name="Coutinho P.M."/>
            <person name="Minx P."/>
            <person name="Latreille P."/>
            <person name="Cordum H."/>
            <person name="Van Brunt A."/>
            <person name="Kim K."/>
            <person name="Fulton R.S."/>
            <person name="Fulton L.A."/>
            <person name="Clifton S.W."/>
            <person name="Wilson R.K."/>
            <person name="Knight R.D."/>
            <person name="Gordon J.I."/>
        </authorList>
    </citation>
    <scope>NUCLEOTIDE SEQUENCE [LARGE SCALE GENOMIC DNA]</scope>
    <source>
        <strain>ATCC 8482 / DSM 1447 / JCM 5826 / CCUG 4940 / NBRC 14291 / NCTC 11154</strain>
    </source>
</reference>
<proteinExistence type="inferred from homology"/>
<sequence>MKPTPINIKNKRASFDYEFIDTYTAGIVLTGTEIKSIRLGKASLVDTYCYFVQGELWVKNMHIAEYFYGSYNNHSARRERKLLLNKKELRKLEEAGKNPGFTIVPVRLFINEKGLAKLVVALAKGKKQYDKRESLKEKDDRREMDRMFKR</sequence>
<dbReference type="EMBL" id="CP000139">
    <property type="protein sequence ID" value="ABR40184.1"/>
    <property type="molecule type" value="Genomic_DNA"/>
</dbReference>
<dbReference type="RefSeq" id="WP_005847465.1">
    <property type="nucleotide sequence ID" value="NZ_JANSWM010000062.1"/>
</dbReference>
<dbReference type="SMR" id="A6L3C0"/>
<dbReference type="STRING" id="435590.BVU_2527"/>
<dbReference type="PaxDb" id="435590-BVU_2527"/>
<dbReference type="GeneID" id="5303491"/>
<dbReference type="KEGG" id="bvu:BVU_2527"/>
<dbReference type="eggNOG" id="COG0691">
    <property type="taxonomic scope" value="Bacteria"/>
</dbReference>
<dbReference type="HOGENOM" id="CLU_108953_0_1_10"/>
<dbReference type="BioCyc" id="BVUL435590:G1G59-2631-MONOMER"/>
<dbReference type="Proteomes" id="UP000002861">
    <property type="component" value="Chromosome"/>
</dbReference>
<dbReference type="GO" id="GO:0005829">
    <property type="term" value="C:cytosol"/>
    <property type="evidence" value="ECO:0007669"/>
    <property type="project" value="TreeGrafter"/>
</dbReference>
<dbReference type="GO" id="GO:0003723">
    <property type="term" value="F:RNA binding"/>
    <property type="evidence" value="ECO:0007669"/>
    <property type="project" value="UniProtKB-UniRule"/>
</dbReference>
<dbReference type="GO" id="GO:0070929">
    <property type="term" value="P:trans-translation"/>
    <property type="evidence" value="ECO:0007669"/>
    <property type="project" value="UniProtKB-UniRule"/>
</dbReference>
<dbReference type="CDD" id="cd09294">
    <property type="entry name" value="SmpB"/>
    <property type="match status" value="1"/>
</dbReference>
<dbReference type="Gene3D" id="2.40.280.10">
    <property type="match status" value="1"/>
</dbReference>
<dbReference type="HAMAP" id="MF_00023">
    <property type="entry name" value="SmpB"/>
    <property type="match status" value="1"/>
</dbReference>
<dbReference type="InterPro" id="IPR023620">
    <property type="entry name" value="SmpB"/>
</dbReference>
<dbReference type="InterPro" id="IPR000037">
    <property type="entry name" value="SsrA-bd_prot"/>
</dbReference>
<dbReference type="InterPro" id="IPR020081">
    <property type="entry name" value="SsrA-bd_prot_CS"/>
</dbReference>
<dbReference type="NCBIfam" id="NF003843">
    <property type="entry name" value="PRK05422.1"/>
    <property type="match status" value="1"/>
</dbReference>
<dbReference type="NCBIfam" id="TIGR00086">
    <property type="entry name" value="smpB"/>
    <property type="match status" value="1"/>
</dbReference>
<dbReference type="PANTHER" id="PTHR30308:SF2">
    <property type="entry name" value="SSRA-BINDING PROTEIN"/>
    <property type="match status" value="1"/>
</dbReference>
<dbReference type="PANTHER" id="PTHR30308">
    <property type="entry name" value="TMRNA-BINDING COMPONENT OF TRANS-TRANSLATION TAGGING COMPLEX"/>
    <property type="match status" value="1"/>
</dbReference>
<dbReference type="Pfam" id="PF01668">
    <property type="entry name" value="SmpB"/>
    <property type="match status" value="1"/>
</dbReference>
<dbReference type="SUPFAM" id="SSF74982">
    <property type="entry name" value="Small protein B (SmpB)"/>
    <property type="match status" value="1"/>
</dbReference>
<dbReference type="PROSITE" id="PS01317">
    <property type="entry name" value="SSRP"/>
    <property type="match status" value="1"/>
</dbReference>
<evidence type="ECO:0000255" key="1">
    <source>
        <dbReference type="HAMAP-Rule" id="MF_00023"/>
    </source>
</evidence>
<evidence type="ECO:0000256" key="2">
    <source>
        <dbReference type="SAM" id="MobiDB-lite"/>
    </source>
</evidence>
<accession>A6L3C0</accession>
<comment type="function">
    <text evidence="1">Required for rescue of stalled ribosomes mediated by trans-translation. Binds to transfer-messenger RNA (tmRNA), required for stable association of tmRNA with ribosomes. tmRNA and SmpB together mimic tRNA shape, replacing the anticodon stem-loop with SmpB. tmRNA is encoded by the ssrA gene; the 2 termini fold to resemble tRNA(Ala) and it encodes a 'tag peptide', a short internal open reading frame. During trans-translation Ala-aminoacylated tmRNA acts like a tRNA, entering the A-site of stalled ribosomes, displacing the stalled mRNA. The ribosome then switches to translate the ORF on the tmRNA; the nascent peptide is terminated with the 'tag peptide' encoded by the tmRNA and targeted for degradation. The ribosome is freed to recommence translation, which seems to be the essential function of trans-translation.</text>
</comment>
<comment type="subcellular location">
    <subcellularLocation>
        <location evidence="1">Cytoplasm</location>
    </subcellularLocation>
    <text evidence="1">The tmRNA-SmpB complex associates with stalled 70S ribosomes.</text>
</comment>
<comment type="similarity">
    <text evidence="1">Belongs to the SmpB family.</text>
</comment>
<organism>
    <name type="scientific">Phocaeicola vulgatus (strain ATCC 8482 / DSM 1447 / JCM 5826 / CCUG 4940 / NBRC 14291 / NCTC 11154)</name>
    <name type="common">Bacteroides vulgatus</name>
    <dbReference type="NCBI Taxonomy" id="435590"/>
    <lineage>
        <taxon>Bacteria</taxon>
        <taxon>Pseudomonadati</taxon>
        <taxon>Bacteroidota</taxon>
        <taxon>Bacteroidia</taxon>
        <taxon>Bacteroidales</taxon>
        <taxon>Bacteroidaceae</taxon>
        <taxon>Phocaeicola</taxon>
    </lineage>
</organism>
<gene>
    <name evidence="1" type="primary">smpB</name>
    <name type="ordered locus">BVU_2527</name>
</gene>
<feature type="chain" id="PRO_1000002000" description="SsrA-binding protein">
    <location>
        <begin position="1"/>
        <end position="150"/>
    </location>
</feature>
<feature type="region of interest" description="Disordered" evidence="2">
    <location>
        <begin position="130"/>
        <end position="150"/>
    </location>
</feature>
<name>SSRP_PHOV8</name>